<keyword id="KW-0963">Cytoplasm</keyword>
<keyword id="KW-0206">Cytoskeleton</keyword>
<keyword id="KW-0325">Glycoprotein</keyword>
<keyword id="KW-0472">Membrane</keyword>
<keyword id="KW-0479">Metal-binding</keyword>
<keyword id="KW-1185">Reference proteome</keyword>
<keyword id="KW-0732">Signal</keyword>
<keyword id="KW-0808">Transferase</keyword>
<keyword id="KW-0812">Transmembrane</keyword>
<keyword id="KW-1133">Transmembrane helix</keyword>
<keyword id="KW-0832">Ubl conjugation</keyword>
<keyword id="KW-0833">Ubl conjugation pathway</keyword>
<keyword id="KW-0862">Zinc</keyword>
<keyword id="KW-0863">Zinc-finger</keyword>
<gene>
    <name type="primary">RNF128</name>
</gene>
<organism>
    <name type="scientific">Pongo abelii</name>
    <name type="common">Sumatran orangutan</name>
    <name type="synonym">Pongo pygmaeus abelii</name>
    <dbReference type="NCBI Taxonomy" id="9601"/>
    <lineage>
        <taxon>Eukaryota</taxon>
        <taxon>Metazoa</taxon>
        <taxon>Chordata</taxon>
        <taxon>Craniata</taxon>
        <taxon>Vertebrata</taxon>
        <taxon>Euteleostomi</taxon>
        <taxon>Mammalia</taxon>
        <taxon>Eutheria</taxon>
        <taxon>Euarchontoglires</taxon>
        <taxon>Primates</taxon>
        <taxon>Haplorrhini</taxon>
        <taxon>Catarrhini</taxon>
        <taxon>Hominidae</taxon>
        <taxon>Pongo</taxon>
    </lineage>
</organism>
<sequence length="428" mass="46483">MGPPLGAGVSCRGGCGSSRLLAWCFLLALSPQAPGSRGAEAVWTAYLNVSWRVPHTGVNRTVWELSEEGVYGQDSPLEPVAGVLVPPDGPGALNACNPHTNFTVPTVWGSTVQVSWLALIQRGGGCTFADKIHLAYERGASGAVIFNFPGTRNEVIPMSHPGAGDIVAIMIGNLKGTKILQSIQRGIQVTMVIEVGKKHGPWVNHYSIFFVSVSFFIITAATVGYFIFYSARRLRNARAQSRKQRQLKADAKKAIGRLQLRTLKQGDREIGPDGDSCAVCIELYKPNDLVRILTCNHIFHKTCVDPWLLEHRTCPMCKCDILKALGIEVDVEDGSVSLQVPVSNEISNSASSHEEDNRSETASSGYASVQGADEPPLEEHVQSTNENLQLVNHEANSVAVDVIPHVDNPTFEEDETPHQETAVREIKS</sequence>
<accession>Q5RF74</accession>
<reference key="1">
    <citation type="submission" date="2004-11" db="EMBL/GenBank/DDBJ databases">
        <authorList>
            <consortium name="The German cDNA consortium"/>
        </authorList>
    </citation>
    <scope>NUCLEOTIDE SEQUENCE [LARGE SCALE MRNA]</scope>
    <source>
        <tissue>Kidney</tissue>
    </source>
</reference>
<proteinExistence type="evidence at transcript level"/>
<dbReference type="EC" id="2.3.2.27"/>
<dbReference type="EMBL" id="CR857287">
    <property type="protein sequence ID" value="CAH89583.1"/>
    <property type="molecule type" value="mRNA"/>
</dbReference>
<dbReference type="RefSeq" id="NP_001124698.1">
    <property type="nucleotide sequence ID" value="NM_001131226.2"/>
</dbReference>
<dbReference type="SMR" id="Q5RF74"/>
<dbReference type="FunCoup" id="Q5RF74">
    <property type="interactions" value="1073"/>
</dbReference>
<dbReference type="STRING" id="9601.ENSPPYP00000023062"/>
<dbReference type="GlyCosmos" id="Q5RF74">
    <property type="glycosylation" value="3 sites, No reported glycans"/>
</dbReference>
<dbReference type="GeneID" id="100171545"/>
<dbReference type="KEGG" id="pon:100171545"/>
<dbReference type="CTD" id="79589"/>
<dbReference type="eggNOG" id="KOG4628">
    <property type="taxonomic scope" value="Eukaryota"/>
</dbReference>
<dbReference type="HOGENOM" id="CLU_049885_0_0_1"/>
<dbReference type="InParanoid" id="Q5RF74"/>
<dbReference type="OrthoDB" id="5357315at2759"/>
<dbReference type="TreeFam" id="TF317486"/>
<dbReference type="UniPathway" id="UPA00143"/>
<dbReference type="Proteomes" id="UP000001595">
    <property type="component" value="Chromosome X"/>
</dbReference>
<dbReference type="GO" id="GO:0005856">
    <property type="term" value="C:cytoskeleton"/>
    <property type="evidence" value="ECO:0007669"/>
    <property type="project" value="UniProtKB-SubCell"/>
</dbReference>
<dbReference type="GO" id="GO:0012505">
    <property type="term" value="C:endomembrane system"/>
    <property type="evidence" value="ECO:0007669"/>
    <property type="project" value="UniProtKB-SubCell"/>
</dbReference>
<dbReference type="GO" id="GO:0016020">
    <property type="term" value="C:membrane"/>
    <property type="evidence" value="ECO:0007669"/>
    <property type="project" value="UniProtKB-KW"/>
</dbReference>
<dbReference type="GO" id="GO:0048471">
    <property type="term" value="C:perinuclear region of cytoplasm"/>
    <property type="evidence" value="ECO:0007669"/>
    <property type="project" value="UniProtKB-SubCell"/>
</dbReference>
<dbReference type="GO" id="GO:0016740">
    <property type="term" value="F:transferase activity"/>
    <property type="evidence" value="ECO:0007669"/>
    <property type="project" value="UniProtKB-KW"/>
</dbReference>
<dbReference type="GO" id="GO:0008270">
    <property type="term" value="F:zinc ion binding"/>
    <property type="evidence" value="ECO:0007669"/>
    <property type="project" value="UniProtKB-KW"/>
</dbReference>
<dbReference type="GO" id="GO:0016567">
    <property type="term" value="P:protein ubiquitination"/>
    <property type="evidence" value="ECO:0007669"/>
    <property type="project" value="UniProtKB-UniPathway"/>
</dbReference>
<dbReference type="CDD" id="cd02122">
    <property type="entry name" value="PA_GRAIL_like"/>
    <property type="match status" value="1"/>
</dbReference>
<dbReference type="CDD" id="cd16802">
    <property type="entry name" value="RING-H2_RNF128-like"/>
    <property type="match status" value="1"/>
</dbReference>
<dbReference type="FunFam" id="3.50.30.30:FF:000003">
    <property type="entry name" value="E3 ubiquitin-protein ligase RNF128"/>
    <property type="match status" value="1"/>
</dbReference>
<dbReference type="FunFam" id="3.30.40.10:FF:000009">
    <property type="entry name" value="E3 ubiquitin-protein ligase RNF130"/>
    <property type="match status" value="1"/>
</dbReference>
<dbReference type="Gene3D" id="3.50.30.30">
    <property type="match status" value="1"/>
</dbReference>
<dbReference type="Gene3D" id="3.30.40.10">
    <property type="entry name" value="Zinc/RING finger domain, C3HC4 (zinc finger)"/>
    <property type="match status" value="1"/>
</dbReference>
<dbReference type="InterPro" id="IPR046450">
    <property type="entry name" value="PA_dom_sf"/>
</dbReference>
<dbReference type="InterPro" id="IPR003137">
    <property type="entry name" value="PA_domain"/>
</dbReference>
<dbReference type="InterPro" id="IPR001841">
    <property type="entry name" value="Znf_RING"/>
</dbReference>
<dbReference type="InterPro" id="IPR013083">
    <property type="entry name" value="Znf_RING/FYVE/PHD"/>
</dbReference>
<dbReference type="InterPro" id="IPR051073">
    <property type="entry name" value="ZNRF3_Arkadia_E3_ligases"/>
</dbReference>
<dbReference type="PANTHER" id="PTHR16200">
    <property type="entry name" value="RING ZINC FINGER"/>
    <property type="match status" value="1"/>
</dbReference>
<dbReference type="Pfam" id="PF02225">
    <property type="entry name" value="PA"/>
    <property type="match status" value="1"/>
</dbReference>
<dbReference type="Pfam" id="PF13639">
    <property type="entry name" value="zf-RING_2"/>
    <property type="match status" value="1"/>
</dbReference>
<dbReference type="SMART" id="SM00184">
    <property type="entry name" value="RING"/>
    <property type="match status" value="1"/>
</dbReference>
<dbReference type="SUPFAM" id="SSF52025">
    <property type="entry name" value="PA domain"/>
    <property type="match status" value="1"/>
</dbReference>
<dbReference type="SUPFAM" id="SSF57850">
    <property type="entry name" value="RING/U-box"/>
    <property type="match status" value="1"/>
</dbReference>
<dbReference type="PROSITE" id="PS50089">
    <property type="entry name" value="ZF_RING_2"/>
    <property type="match status" value="1"/>
</dbReference>
<name>RN128_PONAB</name>
<comment type="function">
    <text evidence="2">E3 ubiquitin-protein ligase that catalyzes 'Lys-27', 'Lys-48'- or 'Lys-63'-linked polyubiquitin chains formation and plays a role in different biological processes such as modulation of immune response, cytoskeletal dynamics or protein homeostasis. Inhibits IL2 and IL4 transcription, thereby playing an important role in the induction of the anergic phenotype, a long-term stable state of T-lymphocyte unresponsiveness to antigenic stimulation associated with the blockade of interleukin production. Ubiquitinates ARPC5 with 'Lys-48' linkages and COR1A with 'Lys-63' linkages leading to their degradation, down-regulation of these cytoskeletal components results in impaired lamellipodium formation and reduced accumulation of F-actin at the immunological synapse. Functions in the patterning of the dorsal ectoderm; sensitizes ectoderm to respond to neural-inducing signals. Plays a positive role in innate immune response by promoting 'Lys-63'-linked ubiquitination of TBK1 after RNA- or DNA-virus infection. Regulates alveolar macrophage activation and neutrophil infiltration by interacting with TLR4, targeting it for degradation, and inhibiting NF-kappa-B activation, hence decreasing pro-inflammatory cytokines. Negatively regulates the IL-3/STAT5 signaling pathway by facilitating 'Lys-27'-linked polyubiquitination of IL3RA leading to its degradation via lysosomal pathway. Directly regulates the N-glycosylation process in the endoplasmic reticulum by targeting the glycosyl-transferase RPN1 for ubiquitination and degradation. Other substrates targeted for degradation by RNF128 include transmembrane proteins CD40L, CD83 or the tetraspanin CD151.</text>
</comment>
<comment type="catalytic activity">
    <reaction evidence="2">
        <text>S-ubiquitinyl-[E2 ubiquitin-conjugating enzyme]-L-cysteine + [acceptor protein]-L-lysine = [E2 ubiquitin-conjugating enzyme]-L-cysteine + N(6)-ubiquitinyl-[acceptor protein]-L-lysine.</text>
        <dbReference type="EC" id="2.3.2.27"/>
    </reaction>
</comment>
<comment type="pathway">
    <text evidence="2">Protein modification; protein ubiquitination.</text>
</comment>
<comment type="subcellular location">
    <subcellularLocation>
        <location evidence="2">Cytoplasm</location>
    </subcellularLocation>
    <subcellularLocation>
        <location evidence="2">Endomembrane system</location>
        <topology evidence="2">Single-pass membrane protein</topology>
    </subcellularLocation>
    <subcellularLocation>
        <location evidence="2">Cytoplasm</location>
        <location evidence="2">Cytoskeleton</location>
    </subcellularLocation>
    <subcellularLocation>
        <location evidence="2">Cytoplasm</location>
        <location evidence="2">Perinuclear region</location>
    </subcellularLocation>
    <text evidence="1">Localized in an asymmetric perinuclear punctate manner. Localizes to the internal pool of the transferrin recycling endosomal pathway. Partially colocalized with the endoplasmic reticulum resident HSPA5, with Golgi resident STX5, and with the late endosomal GTPase RAB7A (By similarity).</text>
</comment>
<comment type="domain">
    <text evidence="2">Binding to E2 ubiquitin-conjugating enzyme requires an intact RING finger domain.</text>
</comment>
<comment type="PTM">
    <text evidence="2">Auto-ubiquitinated. Controls the development of T-cell clonal anergy by ubiquitination.</text>
</comment>
<evidence type="ECO:0000250" key="1"/>
<evidence type="ECO:0000250" key="2">
    <source>
        <dbReference type="UniProtKB" id="Q8TEB7"/>
    </source>
</evidence>
<evidence type="ECO:0000255" key="3"/>
<evidence type="ECO:0000255" key="4">
    <source>
        <dbReference type="PROSITE-ProRule" id="PRU00175"/>
    </source>
</evidence>
<evidence type="ECO:0000256" key="5">
    <source>
        <dbReference type="SAM" id="MobiDB-lite"/>
    </source>
</evidence>
<evidence type="ECO:0000305" key="6"/>
<protein>
    <recommendedName>
        <fullName>E3 ubiquitin-protein ligase RNF128</fullName>
        <ecNumber>2.3.2.27</ecNumber>
    </recommendedName>
    <alternativeName>
        <fullName>RING finger protein 128</fullName>
    </alternativeName>
    <alternativeName>
        <fullName evidence="6">RING-type E3 ubiquitin transferase RNF128</fullName>
    </alternativeName>
</protein>
<feature type="signal peptide" evidence="3">
    <location>
        <begin position="1"/>
        <end position="38"/>
    </location>
</feature>
<feature type="chain" id="PRO_0000261414" description="E3 ubiquitin-protein ligase RNF128">
    <location>
        <begin position="39"/>
        <end position="428"/>
    </location>
</feature>
<feature type="transmembrane region" description="Helical" evidence="3">
    <location>
        <begin position="208"/>
        <end position="228"/>
    </location>
</feature>
<feature type="domain" description="PA">
    <location>
        <begin position="75"/>
        <end position="183"/>
    </location>
</feature>
<feature type="zinc finger region" description="RING-type; atypical" evidence="4">
    <location>
        <begin position="277"/>
        <end position="318"/>
    </location>
</feature>
<feature type="region of interest" description="Disordered" evidence="5">
    <location>
        <begin position="346"/>
        <end position="428"/>
    </location>
</feature>
<feature type="compositionally biased region" description="Basic and acidic residues" evidence="5">
    <location>
        <begin position="416"/>
        <end position="428"/>
    </location>
</feature>
<feature type="glycosylation site" description="N-linked (GlcNAc...) asparagine" evidence="3">
    <location>
        <position position="48"/>
    </location>
</feature>
<feature type="glycosylation site" description="N-linked (GlcNAc...) asparagine" evidence="3">
    <location>
        <position position="59"/>
    </location>
</feature>
<feature type="glycosylation site" description="N-linked (GlcNAc...) asparagine" evidence="3">
    <location>
        <position position="101"/>
    </location>
</feature>